<sequence length="231" mass="25200">MSLADTIRSSLVPIHREGYRFIAAFGIGSVILGLLWEPLFWIGLLLTAWCAYFFRDPQRITPVDDRLVIAPADGIVSSVGPALPPPELGLSGEFTRVSVFMNVFSCHINRAPVRGRISLIEHRPGKFLNADLDKASMENERNSLIIESPYGPVAVVQIAGLIARRIVCWAEAPGEISVGERFGLIRFGSRVDVYLPREARPRVAVGQVSVGGETIIAEFGSNAPPPLVRVS</sequence>
<protein>
    <recommendedName>
        <fullName evidence="1">Phosphatidylserine decarboxylase proenzyme</fullName>
        <ecNumber evidence="1">4.1.1.65</ecNumber>
    </recommendedName>
    <component>
        <recommendedName>
            <fullName evidence="1">Phosphatidylserine decarboxylase alpha chain</fullName>
        </recommendedName>
    </component>
    <component>
        <recommendedName>
            <fullName evidence="1">Phosphatidylserine decarboxylase beta chain</fullName>
        </recommendedName>
    </component>
</protein>
<comment type="function">
    <text evidence="1">Catalyzes the formation of phosphatidylethanolamine (PtdEtn) from phosphatidylserine (PtdSer).</text>
</comment>
<comment type="catalytic activity">
    <reaction evidence="1">
        <text>a 1,2-diacyl-sn-glycero-3-phospho-L-serine + H(+) = a 1,2-diacyl-sn-glycero-3-phosphoethanolamine + CO2</text>
        <dbReference type="Rhea" id="RHEA:20828"/>
        <dbReference type="ChEBI" id="CHEBI:15378"/>
        <dbReference type="ChEBI" id="CHEBI:16526"/>
        <dbReference type="ChEBI" id="CHEBI:57262"/>
        <dbReference type="ChEBI" id="CHEBI:64612"/>
        <dbReference type="EC" id="4.1.1.65"/>
    </reaction>
</comment>
<comment type="cofactor">
    <cofactor evidence="1">
        <name>pyruvate</name>
        <dbReference type="ChEBI" id="CHEBI:15361"/>
    </cofactor>
    <text evidence="1">Binds 1 pyruvoyl group covalently per subunit.</text>
</comment>
<comment type="pathway">
    <text evidence="1">Phospholipid metabolism; phosphatidylethanolamine biosynthesis; phosphatidylethanolamine from CDP-diacylglycerol: step 2/2.</text>
</comment>
<comment type="subunit">
    <text evidence="1">Heterodimer of a large membrane-associated beta subunit and a small pyruvoyl-containing alpha subunit.</text>
</comment>
<comment type="subcellular location">
    <subcellularLocation>
        <location evidence="1">Cell membrane</location>
        <topology evidence="1">Peripheral membrane protein</topology>
    </subcellularLocation>
</comment>
<comment type="PTM">
    <text evidence="1">Is synthesized initially as an inactive proenzyme. Formation of the active enzyme involves a self-maturation process in which the active site pyruvoyl group is generated from an internal serine residue via an autocatalytic post-translational modification. Two non-identical subunits are generated from the proenzyme in this reaction, and the pyruvate is formed at the N-terminus of the alpha chain, which is derived from the carboxyl end of the proenzyme. The post-translation cleavage follows an unusual pathway, termed non-hydrolytic serinolysis, in which the side chain hydroxyl group of the serine supplies its oxygen atom to form the C-terminus of the beta chain, while the remainder of the serine residue undergoes an oxidative deamination to produce ammonia and the pyruvoyl prosthetic group on the alpha chain.</text>
</comment>
<comment type="similarity">
    <text evidence="1">Belongs to the phosphatidylserine decarboxylase family. PSD-A subfamily.</text>
</comment>
<reference key="1">
    <citation type="submission" date="2006-06" db="EMBL/GenBank/DDBJ databases">
        <title>Complete sequence of chromosome of Mesorhizobium sp. BNC1.</title>
        <authorList>
            <consortium name="US DOE Joint Genome Institute"/>
            <person name="Copeland A."/>
            <person name="Lucas S."/>
            <person name="Lapidus A."/>
            <person name="Barry K."/>
            <person name="Detter J.C."/>
            <person name="Glavina del Rio T."/>
            <person name="Hammon N."/>
            <person name="Israni S."/>
            <person name="Dalin E."/>
            <person name="Tice H."/>
            <person name="Pitluck S."/>
            <person name="Chertkov O."/>
            <person name="Brettin T."/>
            <person name="Bruce D."/>
            <person name="Han C."/>
            <person name="Tapia R."/>
            <person name="Gilna P."/>
            <person name="Schmutz J."/>
            <person name="Larimer F."/>
            <person name="Land M."/>
            <person name="Hauser L."/>
            <person name="Kyrpides N."/>
            <person name="Mikhailova N."/>
            <person name="Richardson P."/>
        </authorList>
    </citation>
    <scope>NUCLEOTIDE SEQUENCE [LARGE SCALE GENOMIC DNA]</scope>
    <source>
        <strain>BNC1</strain>
    </source>
</reference>
<accession>Q11JQ0</accession>
<gene>
    <name evidence="1" type="primary">psd</name>
    <name type="ordered locus">Meso_0978</name>
</gene>
<name>PSD_CHESB</name>
<organism>
    <name type="scientific">Chelativorans sp. (strain BNC1)</name>
    <dbReference type="NCBI Taxonomy" id="266779"/>
    <lineage>
        <taxon>Bacteria</taxon>
        <taxon>Pseudomonadati</taxon>
        <taxon>Pseudomonadota</taxon>
        <taxon>Alphaproteobacteria</taxon>
        <taxon>Hyphomicrobiales</taxon>
        <taxon>Phyllobacteriaceae</taxon>
        <taxon>Chelativorans</taxon>
    </lineage>
</organism>
<keyword id="KW-1003">Cell membrane</keyword>
<keyword id="KW-0210">Decarboxylase</keyword>
<keyword id="KW-0444">Lipid biosynthesis</keyword>
<keyword id="KW-0443">Lipid metabolism</keyword>
<keyword id="KW-0456">Lyase</keyword>
<keyword id="KW-0472">Membrane</keyword>
<keyword id="KW-0594">Phospholipid biosynthesis</keyword>
<keyword id="KW-1208">Phospholipid metabolism</keyword>
<keyword id="KW-0670">Pyruvate</keyword>
<keyword id="KW-0865">Zymogen</keyword>
<proteinExistence type="inferred from homology"/>
<dbReference type="EC" id="4.1.1.65" evidence="1"/>
<dbReference type="EMBL" id="CP000390">
    <property type="protein sequence ID" value="ABG62375.1"/>
    <property type="molecule type" value="Genomic_DNA"/>
</dbReference>
<dbReference type="STRING" id="266779.Meso_0978"/>
<dbReference type="KEGG" id="mes:Meso_0978"/>
<dbReference type="eggNOG" id="COG0688">
    <property type="taxonomic scope" value="Bacteria"/>
</dbReference>
<dbReference type="HOGENOM" id="CLU_072492_2_0_5"/>
<dbReference type="OrthoDB" id="9790893at2"/>
<dbReference type="UniPathway" id="UPA00558">
    <property type="reaction ID" value="UER00616"/>
</dbReference>
<dbReference type="GO" id="GO:0005886">
    <property type="term" value="C:plasma membrane"/>
    <property type="evidence" value="ECO:0007669"/>
    <property type="project" value="UniProtKB-SubCell"/>
</dbReference>
<dbReference type="GO" id="GO:0004609">
    <property type="term" value="F:phosphatidylserine decarboxylase activity"/>
    <property type="evidence" value="ECO:0007669"/>
    <property type="project" value="UniProtKB-UniRule"/>
</dbReference>
<dbReference type="GO" id="GO:0006646">
    <property type="term" value="P:phosphatidylethanolamine biosynthetic process"/>
    <property type="evidence" value="ECO:0007669"/>
    <property type="project" value="UniProtKB-UniRule"/>
</dbReference>
<dbReference type="HAMAP" id="MF_00664">
    <property type="entry name" value="PS_decarb_PSD_A"/>
    <property type="match status" value="1"/>
</dbReference>
<dbReference type="InterPro" id="IPR003817">
    <property type="entry name" value="PS_Dcarbxylase"/>
</dbReference>
<dbReference type="InterPro" id="IPR033175">
    <property type="entry name" value="PSD-A"/>
</dbReference>
<dbReference type="NCBIfam" id="NF003677">
    <property type="entry name" value="PRK05305.1-1"/>
    <property type="match status" value="1"/>
</dbReference>
<dbReference type="NCBIfam" id="NF003678">
    <property type="entry name" value="PRK05305.1-2"/>
    <property type="match status" value="1"/>
</dbReference>
<dbReference type="NCBIfam" id="NF003679">
    <property type="entry name" value="PRK05305.1-3"/>
    <property type="match status" value="1"/>
</dbReference>
<dbReference type="NCBIfam" id="NF003685">
    <property type="entry name" value="PRK05305.2-5"/>
    <property type="match status" value="1"/>
</dbReference>
<dbReference type="PANTHER" id="PTHR35809">
    <property type="entry name" value="ARCHAETIDYLSERINE DECARBOXYLASE PROENZYME-RELATED"/>
    <property type="match status" value="1"/>
</dbReference>
<dbReference type="PANTHER" id="PTHR35809:SF1">
    <property type="entry name" value="ARCHAETIDYLSERINE DECARBOXYLASE PROENZYME-RELATED"/>
    <property type="match status" value="1"/>
</dbReference>
<dbReference type="Pfam" id="PF02666">
    <property type="entry name" value="PS_Dcarbxylase"/>
    <property type="match status" value="1"/>
</dbReference>
<evidence type="ECO:0000255" key="1">
    <source>
        <dbReference type="HAMAP-Rule" id="MF_00664"/>
    </source>
</evidence>
<feature type="chain" id="PRO_0000262227" description="Phosphatidylserine decarboxylase beta chain" evidence="1">
    <location>
        <begin position="1"/>
        <end position="188"/>
    </location>
</feature>
<feature type="chain" id="PRO_0000262228" description="Phosphatidylserine decarboxylase alpha chain" evidence="1">
    <location>
        <begin position="189"/>
        <end position="231"/>
    </location>
</feature>
<feature type="active site" description="Schiff-base intermediate with substrate; via pyruvic acid" evidence="1">
    <location>
        <position position="189"/>
    </location>
</feature>
<feature type="site" description="Cleavage (non-hydrolytic); by autocatalysis" evidence="1">
    <location>
        <begin position="188"/>
        <end position="189"/>
    </location>
</feature>
<feature type="modified residue" description="Pyruvic acid (Ser); by autocatalysis" evidence="1">
    <location>
        <position position="189"/>
    </location>
</feature>